<reference key="1">
    <citation type="journal article" date="2005" name="Protein Sci.">
        <title>Crystal structure of the complex formed between a group I phospholipase A2 and a naturally occurring fatty acid at 2.7 A resolution.</title>
        <authorList>
            <person name="Singh G."/>
            <person name="Jasti J."/>
            <person name="Saravanan K."/>
            <person name="Sharma S."/>
            <person name="Kaur P."/>
            <person name="Srinivasan A."/>
            <person name="Singh T.P."/>
        </authorList>
    </citation>
    <scope>NUCLEOTIDE SEQUENCE [MRNA]</scope>
    <scope>MASS SPECTROMETRY</scope>
    <scope>X-RAY CRYSTALLOGRAPHY (2.7 ANGSTROMS) OF 20-137 IN COMPLEX WITH N-TRIDECANOIC ACID</scope>
    <scope>DISULFIDE BONDS</scope>
    <source>
        <tissue>Venom</tissue>
        <tissue>Venom gland</tissue>
    </source>
</reference>
<name>PA2A1_BUNCE</name>
<sequence>LVAVCVSLLGAANIPPQPLNLYQLMNMIQCANTRTWPSYTNYGCYCGKGGSGTPVDDLDRCCYTHDHCYNDAKNIDGCNPVTKTYSYTCTEPTITCNDSKDKCARFVCDCDRTAAICFAKAPYNTSNVMIRSTNSCQ</sequence>
<dbReference type="EC" id="3.1.1.4"/>
<dbReference type="EMBL" id="AY455754">
    <property type="protein sequence ID" value="AAS20530.1"/>
    <property type="molecule type" value="mRNA"/>
</dbReference>
<dbReference type="PDB" id="1TC8">
    <property type="method" value="X-ray"/>
    <property type="resolution" value="2.70 A"/>
    <property type="chains" value="A=20-137"/>
</dbReference>
<dbReference type="PDBsum" id="1TC8"/>
<dbReference type="SMR" id="Q6SLM2"/>
<dbReference type="EvolutionaryTrace" id="Q6SLM2"/>
<dbReference type="GO" id="GO:0005576">
    <property type="term" value="C:extracellular region"/>
    <property type="evidence" value="ECO:0007669"/>
    <property type="project" value="UniProtKB-SubCell"/>
</dbReference>
<dbReference type="GO" id="GO:0005509">
    <property type="term" value="F:calcium ion binding"/>
    <property type="evidence" value="ECO:0007669"/>
    <property type="project" value="InterPro"/>
</dbReference>
<dbReference type="GO" id="GO:0047498">
    <property type="term" value="F:calcium-dependent phospholipase A2 activity"/>
    <property type="evidence" value="ECO:0007669"/>
    <property type="project" value="TreeGrafter"/>
</dbReference>
<dbReference type="GO" id="GO:0005543">
    <property type="term" value="F:phospholipid binding"/>
    <property type="evidence" value="ECO:0007669"/>
    <property type="project" value="TreeGrafter"/>
</dbReference>
<dbReference type="GO" id="GO:0090729">
    <property type="term" value="F:toxin activity"/>
    <property type="evidence" value="ECO:0007669"/>
    <property type="project" value="UniProtKB-KW"/>
</dbReference>
<dbReference type="GO" id="GO:0050482">
    <property type="term" value="P:arachidonate secretion"/>
    <property type="evidence" value="ECO:0007669"/>
    <property type="project" value="InterPro"/>
</dbReference>
<dbReference type="GO" id="GO:0016042">
    <property type="term" value="P:lipid catabolic process"/>
    <property type="evidence" value="ECO:0007669"/>
    <property type="project" value="UniProtKB-KW"/>
</dbReference>
<dbReference type="GO" id="GO:0006644">
    <property type="term" value="P:phospholipid metabolic process"/>
    <property type="evidence" value="ECO:0007669"/>
    <property type="project" value="InterPro"/>
</dbReference>
<dbReference type="CDD" id="cd00125">
    <property type="entry name" value="PLA2c"/>
    <property type="match status" value="1"/>
</dbReference>
<dbReference type="FunFam" id="1.20.90.10:FF:000007">
    <property type="entry name" value="Acidic phospholipase A2"/>
    <property type="match status" value="1"/>
</dbReference>
<dbReference type="Gene3D" id="1.20.90.10">
    <property type="entry name" value="Phospholipase A2 domain"/>
    <property type="match status" value="1"/>
</dbReference>
<dbReference type="InterPro" id="IPR001211">
    <property type="entry name" value="PLipase_A2"/>
</dbReference>
<dbReference type="InterPro" id="IPR033112">
    <property type="entry name" value="PLipase_A2_Asp_AS"/>
</dbReference>
<dbReference type="InterPro" id="IPR016090">
    <property type="entry name" value="PLipase_A2_dom"/>
</dbReference>
<dbReference type="InterPro" id="IPR036444">
    <property type="entry name" value="PLipase_A2_dom_sf"/>
</dbReference>
<dbReference type="InterPro" id="IPR033113">
    <property type="entry name" value="PLipase_A2_His_AS"/>
</dbReference>
<dbReference type="PANTHER" id="PTHR11716:SF94">
    <property type="entry name" value="PHOSPHOLIPASE A2"/>
    <property type="match status" value="1"/>
</dbReference>
<dbReference type="PANTHER" id="PTHR11716">
    <property type="entry name" value="PHOSPHOLIPASE A2 FAMILY MEMBER"/>
    <property type="match status" value="1"/>
</dbReference>
<dbReference type="Pfam" id="PF00068">
    <property type="entry name" value="Phospholip_A2_1"/>
    <property type="match status" value="1"/>
</dbReference>
<dbReference type="PRINTS" id="PR00389">
    <property type="entry name" value="PHPHLIPASEA2"/>
</dbReference>
<dbReference type="SMART" id="SM00085">
    <property type="entry name" value="PA2c"/>
    <property type="match status" value="1"/>
</dbReference>
<dbReference type="SUPFAM" id="SSF48619">
    <property type="entry name" value="Phospholipase A2, PLA2"/>
    <property type="match status" value="1"/>
</dbReference>
<dbReference type="PROSITE" id="PS00119">
    <property type="entry name" value="PA2_ASP"/>
    <property type="match status" value="1"/>
</dbReference>
<dbReference type="PROSITE" id="PS00118">
    <property type="entry name" value="PA2_HIS"/>
    <property type="match status" value="1"/>
</dbReference>
<evidence type="ECO:0000250" key="1"/>
<evidence type="ECO:0000250" key="2">
    <source>
        <dbReference type="UniProtKB" id="P14418"/>
    </source>
</evidence>
<evidence type="ECO:0000255" key="3"/>
<evidence type="ECO:0000255" key="4">
    <source>
        <dbReference type="PROSITE-ProRule" id="PRU10035"/>
    </source>
</evidence>
<evidence type="ECO:0000255" key="5">
    <source>
        <dbReference type="PROSITE-ProRule" id="PRU10036"/>
    </source>
</evidence>
<evidence type="ECO:0000269" key="6">
    <source>
    </source>
</evidence>
<evidence type="ECO:0000305" key="7"/>
<evidence type="ECO:0007744" key="8">
    <source>
        <dbReference type="PDB" id="1TC8"/>
    </source>
</evidence>
<evidence type="ECO:0007829" key="9">
    <source>
        <dbReference type="PDB" id="1TC8"/>
    </source>
</evidence>
<protein>
    <recommendedName>
        <fullName>Acidic phospholipase A2 1</fullName>
        <shortName>svPLA2</shortName>
        <ecNumber>3.1.1.4</ecNumber>
    </recommendedName>
    <alternativeName>
        <fullName>Phosphatidylcholine 2-acylhydrolase</fullName>
    </alternativeName>
</protein>
<organism>
    <name type="scientific">Bungarus caeruleus</name>
    <name type="common">Indian krait</name>
    <dbReference type="NCBI Taxonomy" id="132961"/>
    <lineage>
        <taxon>Eukaryota</taxon>
        <taxon>Metazoa</taxon>
        <taxon>Chordata</taxon>
        <taxon>Craniata</taxon>
        <taxon>Vertebrata</taxon>
        <taxon>Euteleostomi</taxon>
        <taxon>Lepidosauria</taxon>
        <taxon>Squamata</taxon>
        <taxon>Bifurcata</taxon>
        <taxon>Unidentata</taxon>
        <taxon>Episquamata</taxon>
        <taxon>Toxicofera</taxon>
        <taxon>Serpentes</taxon>
        <taxon>Colubroidea</taxon>
        <taxon>Elapidae</taxon>
        <taxon>Bungarinae</taxon>
        <taxon>Bungarus</taxon>
    </lineage>
</organism>
<keyword id="KW-0002">3D-structure</keyword>
<keyword id="KW-1203">Blood coagulation cascade inhibiting toxin</keyword>
<keyword id="KW-0106">Calcium</keyword>
<keyword id="KW-1015">Disulfide bond</keyword>
<keyword id="KW-1199">Hemostasis impairing toxin</keyword>
<keyword id="KW-0378">Hydrolase</keyword>
<keyword id="KW-0442">Lipid degradation</keyword>
<keyword id="KW-0443">Lipid metabolism</keyword>
<keyword id="KW-0479">Metal-binding</keyword>
<keyword id="KW-0528">Neurotoxin</keyword>
<keyword id="KW-0638">Presynaptic neurotoxin</keyword>
<keyword id="KW-0964">Secreted</keyword>
<keyword id="KW-0732">Signal</keyword>
<keyword id="KW-0800">Toxin</keyword>
<accession>Q6SLM2</accession>
<feature type="signal peptide" evidence="3">
    <location>
        <begin position="1" status="less than"/>
        <end position="11"/>
    </location>
</feature>
<feature type="propeptide" id="PRO_0000414302">
    <location>
        <begin position="12"/>
        <end position="19"/>
    </location>
</feature>
<feature type="chain" id="PRO_0000414303" description="Acidic phospholipase A2 1">
    <location>
        <begin position="20"/>
        <end position="137"/>
    </location>
</feature>
<feature type="active site" evidence="2">
    <location>
        <position position="65"/>
    </location>
</feature>
<feature type="active site" evidence="2">
    <location>
        <position position="111"/>
    </location>
</feature>
<feature type="binding site" evidence="2">
    <location>
        <position position="45"/>
    </location>
    <ligand>
        <name>Ca(2+)</name>
        <dbReference type="ChEBI" id="CHEBI:29108"/>
    </ligand>
</feature>
<feature type="binding site" evidence="2">
    <location>
        <position position="47"/>
    </location>
    <ligand>
        <name>Ca(2+)</name>
        <dbReference type="ChEBI" id="CHEBI:29108"/>
    </ligand>
</feature>
<feature type="binding site" evidence="2">
    <location>
        <position position="49"/>
    </location>
    <ligand>
        <name>Ca(2+)</name>
        <dbReference type="ChEBI" id="CHEBI:29108"/>
    </ligand>
</feature>
<feature type="binding site" evidence="6">
    <location>
        <position position="49"/>
    </location>
    <ligand>
        <name>tridecanoate</name>
        <dbReference type="ChEBI" id="CHEBI:125832"/>
    </ligand>
</feature>
<feature type="binding site" evidence="6">
    <location>
        <position position="65"/>
    </location>
    <ligand>
        <name>tridecanoate</name>
        <dbReference type="ChEBI" id="CHEBI:125832"/>
    </ligand>
</feature>
<feature type="binding site" evidence="2">
    <location>
        <position position="66"/>
    </location>
    <ligand>
        <name>Ca(2+)</name>
        <dbReference type="ChEBI" id="CHEBI:29108"/>
    </ligand>
</feature>
<feature type="disulfide bond" evidence="6 8">
    <location>
        <begin position="30"/>
        <end position="89"/>
    </location>
</feature>
<feature type="disulfide bond" evidence="6 8">
    <location>
        <begin position="44"/>
        <end position="136"/>
    </location>
</feature>
<feature type="disulfide bond" evidence="6 8">
    <location>
        <begin position="46"/>
        <end position="62"/>
    </location>
</feature>
<feature type="disulfide bond" evidence="6 8">
    <location>
        <begin position="61"/>
        <end position="117"/>
    </location>
</feature>
<feature type="disulfide bond" evidence="6 8">
    <location>
        <begin position="68"/>
        <end position="110"/>
    </location>
</feature>
<feature type="disulfide bond" evidence="6 8">
    <location>
        <begin position="78"/>
        <end position="103"/>
    </location>
</feature>
<feature type="disulfide bond" evidence="6 8">
    <location>
        <begin position="96"/>
        <end position="108"/>
    </location>
</feature>
<feature type="non-terminal residue">
    <location>
        <position position="1"/>
    </location>
</feature>
<feature type="helix" evidence="9">
    <location>
        <begin position="21"/>
        <end position="31"/>
    </location>
</feature>
<feature type="helix" evidence="9">
    <location>
        <begin position="37"/>
        <end position="40"/>
    </location>
</feature>
<feature type="turn" evidence="9">
    <location>
        <begin position="43"/>
        <end position="45"/>
    </location>
</feature>
<feature type="strand" evidence="9">
    <location>
        <begin position="46"/>
        <end position="49"/>
    </location>
</feature>
<feature type="helix" evidence="9">
    <location>
        <begin position="57"/>
        <end position="72"/>
    </location>
</feature>
<feature type="turn" evidence="9">
    <location>
        <begin position="80"/>
        <end position="82"/>
    </location>
</feature>
<feature type="strand" evidence="9">
    <location>
        <begin position="87"/>
        <end position="90"/>
    </location>
</feature>
<feature type="strand" evidence="9">
    <location>
        <begin position="93"/>
        <end position="96"/>
    </location>
</feature>
<feature type="helix" evidence="9">
    <location>
        <begin position="102"/>
        <end position="120"/>
    </location>
</feature>
<feature type="turn" evidence="9">
    <location>
        <begin position="131"/>
        <end position="134"/>
    </location>
</feature>
<proteinExistence type="evidence at protein level"/>
<comment type="function">
    <text evidence="1">Snake venom phospholipase A2 (PLA2) that shows anticoagulant and neurotoxic activities. PLA2 catalyzes the calcium-dependent hydrolysis of the 2-acyl groups in 3-sn-phosphoglycerides (By similarity).</text>
</comment>
<comment type="catalytic activity">
    <reaction evidence="4 5">
        <text>a 1,2-diacyl-sn-glycero-3-phosphocholine + H2O = a 1-acyl-sn-glycero-3-phosphocholine + a fatty acid + H(+)</text>
        <dbReference type="Rhea" id="RHEA:15801"/>
        <dbReference type="ChEBI" id="CHEBI:15377"/>
        <dbReference type="ChEBI" id="CHEBI:15378"/>
        <dbReference type="ChEBI" id="CHEBI:28868"/>
        <dbReference type="ChEBI" id="CHEBI:57643"/>
        <dbReference type="ChEBI" id="CHEBI:58168"/>
        <dbReference type="EC" id="3.1.1.4"/>
    </reaction>
</comment>
<comment type="cofactor">
    <cofactor evidence="2">
        <name>Ca(2+)</name>
        <dbReference type="ChEBI" id="CHEBI:29108"/>
    </cofactor>
    <text evidence="2">Binds 1 Ca(2+) ion.</text>
</comment>
<comment type="subunit">
    <text evidence="6">Monomer.</text>
</comment>
<comment type="subcellular location">
    <subcellularLocation>
        <location>Secreted</location>
    </subcellularLocation>
</comment>
<comment type="tissue specificity">
    <text>Expressed by the venom gland.</text>
</comment>
<comment type="mass spectrometry"/>
<comment type="similarity">
    <text evidence="7">Belongs to the phospholipase A2 family. Group I subfamily. D49 sub-subfamily.</text>
</comment>